<organism>
    <name type="scientific">Heterometrus spinifer</name>
    <name type="common">Asia giant forest scorpion</name>
    <name type="synonym">Malaysian black scorpion</name>
    <dbReference type="NCBI Taxonomy" id="118530"/>
    <lineage>
        <taxon>Eukaryota</taxon>
        <taxon>Metazoa</taxon>
        <taxon>Ecdysozoa</taxon>
        <taxon>Arthropoda</taxon>
        <taxon>Chelicerata</taxon>
        <taxon>Arachnida</taxon>
        <taxon>Scorpiones</taxon>
        <taxon>Iurida</taxon>
        <taxon>Scorpionoidea</taxon>
        <taxon>Scorpionidae</taxon>
        <taxon>Heterometrinae</taxon>
        <taxon>Heterometrus</taxon>
    </lineage>
</organism>
<feature type="signal peptide" evidence="1">
    <location>
        <begin position="1"/>
        <end position="23"/>
    </location>
</feature>
<feature type="peptide" id="PRO_5007393681" description="Spiniferin" evidence="5">
    <location>
        <begin position="24"/>
        <end position="36"/>
    </location>
</feature>
<feature type="propeptide" id="PRO_0000454585" evidence="5">
    <location>
        <begin position="40"/>
        <end position="67"/>
    </location>
</feature>
<feature type="modified residue" description="Leucine amide" evidence="5">
    <location>
        <position position="36"/>
    </location>
</feature>
<feature type="mutagenesis site" description="In spiniferin-M; increase in antibacterial and hemolytic activity; when associated with N-34." evidence="2">
    <original>E</original>
    <variation>K</variation>
    <location>
        <position position="27"/>
    </location>
</feature>
<feature type="mutagenesis site" description="In spiniferin-M; increase in antibacterial and hemolytic activity; when associated with K-27." evidence="2">
    <original>D</original>
    <variation>N</variation>
    <location>
        <position position="34"/>
    </location>
</feature>
<dbReference type="EMBL" id="KC538871">
    <property type="protein sequence ID" value="AGK88597.1"/>
    <property type="molecule type" value="mRNA"/>
</dbReference>
<dbReference type="EMBL" id="KC538872">
    <property type="protein sequence ID" value="AGK88598.1"/>
    <property type="molecule type" value="Genomic_DNA"/>
</dbReference>
<dbReference type="GO" id="GO:0005576">
    <property type="term" value="C:extracellular region"/>
    <property type="evidence" value="ECO:0007669"/>
    <property type="project" value="UniProtKB-SubCell"/>
</dbReference>
<dbReference type="GO" id="GO:0016020">
    <property type="term" value="C:membrane"/>
    <property type="evidence" value="ECO:0007669"/>
    <property type="project" value="UniProtKB-KW"/>
</dbReference>
<dbReference type="GO" id="GO:0044218">
    <property type="term" value="C:other organism cell membrane"/>
    <property type="evidence" value="ECO:0007669"/>
    <property type="project" value="UniProtKB-KW"/>
</dbReference>
<sequence length="67" mass="7600">MKTQLAILLITLVLFQMFSQSDAILGEIWKGIKDILGKRGLNDLSDLDELFDGEISKADLDFLREIM</sequence>
<accession>A0A0C4G4L1</accession>
<proteinExistence type="evidence at protein level"/>
<name>NDB4_HETSP</name>
<evidence type="ECO:0000255" key="1"/>
<evidence type="ECO:0000269" key="2">
    <source>
    </source>
</evidence>
<evidence type="ECO:0000303" key="3">
    <source>
    </source>
</evidence>
<evidence type="ECO:0000305" key="4"/>
<evidence type="ECO:0000305" key="5">
    <source>
    </source>
</evidence>
<evidence type="ECO:0000305" key="6">
    <source>
    </source>
</evidence>
<keyword id="KW-0027">Amidation</keyword>
<keyword id="KW-0929">Antimicrobial</keyword>
<keyword id="KW-0165">Cleavage on pair of basic residues</keyword>
<keyword id="KW-0472">Membrane</keyword>
<keyword id="KW-0964">Secreted</keyword>
<keyword id="KW-0732">Signal</keyword>
<keyword id="KW-1052">Target cell membrane</keyword>
<keyword id="KW-1053">Target membrane</keyword>
<reference key="1">
    <citation type="journal article" date="2014" name="Peptides">
        <title>Genomic and functional characterization of three new venom peptides from the scorpion Heterometrus spinifer.</title>
        <authorList>
            <person name="Wu S."/>
            <person name="Nie Y."/>
            <person name="Zeng X.C."/>
            <person name="Cao H."/>
            <person name="Zhang L."/>
            <person name="Zhou L."/>
            <person name="Yang Y."/>
            <person name="Luo X."/>
            <person name="Liu Y."/>
        </authorList>
    </citation>
    <scope>NUCLEOTIDE SEQUENCE [GENOMIC DNA / MRNA]</scope>
    <scope>FUNCTION</scope>
    <scope>SYNTHESIS OF 24-36</scope>
    <scope>MUTAGENESIS OF GLU-27 AND ASP-34</scope>
    <scope>PROBABLE AMIDATION AT LEU-36</scope>
    <source>
        <tissue>Venom gland</tissue>
    </source>
</reference>
<reference key="2">
    <citation type="journal article" date="2021" name="Microb. Pathog.">
        <title>Identification of the scorpion venom-derived antimicrobial peptide Hp1404 as a new antimicrobial agent against carbapenem-resistant Acinetobacter baumannii.</title>
        <authorList>
            <person name="Luo X."/>
            <person name="Ye X."/>
            <person name="Ding L."/>
            <person name="Zhu W."/>
            <person name="Zhao Z."/>
            <person name="Luo D."/>
            <person name="Liu N."/>
            <person name="Sun L."/>
            <person name="Chen Z."/>
        </authorList>
    </citation>
    <scope>FUNCTION</scope>
    <scope>SYNTHESIS OF 24-37 (AMIDATED PEPTIDE)</scope>
</reference>
<comment type="function">
    <text evidence="2">Alpha-helical and amphipathic peptide with weak antimicrobial activities against both Gram-positive (MIC=41 uM to &gt;82 uM) and Gram-negative (MIC&gt;82 uM) bacteria. It has extremely weak hemolytic activity against human erythrocytes.</text>
</comment>
<comment type="subcellular location">
    <subcellularLocation>
        <location evidence="5">Secreted</location>
    </subcellularLocation>
    <subcellularLocation>
        <location evidence="5">Target cell membrane</location>
    </subcellularLocation>
</comment>
<comment type="tissue specificity">
    <text evidence="5">Expressed by the venom gland.</text>
</comment>
<comment type="domain">
    <text evidence="5 6">Amphipathic and cationic peptide with an alpha-helical structure.</text>
</comment>
<comment type="similarity">
    <text evidence="4">Belongs to the non-disulfide-bridged peptide (NDBP) superfamily. Short antimicrobial peptide (group 4) family.</text>
</comment>
<protein>
    <recommendedName>
        <fullName evidence="3">Spiniferin</fullName>
    </recommendedName>
</protein>